<reference key="1">
    <citation type="journal article" date="2002" name="Genome Res.">
        <title>The genome of Methanosarcina acetivorans reveals extensive metabolic and physiological diversity.</title>
        <authorList>
            <person name="Galagan J.E."/>
            <person name="Nusbaum C."/>
            <person name="Roy A."/>
            <person name="Endrizzi M.G."/>
            <person name="Macdonald P."/>
            <person name="FitzHugh W."/>
            <person name="Calvo S."/>
            <person name="Engels R."/>
            <person name="Smirnov S."/>
            <person name="Atnoor D."/>
            <person name="Brown A."/>
            <person name="Allen N."/>
            <person name="Naylor J."/>
            <person name="Stange-Thomann N."/>
            <person name="DeArellano K."/>
            <person name="Johnson R."/>
            <person name="Linton L."/>
            <person name="McEwan P."/>
            <person name="McKernan K."/>
            <person name="Talamas J."/>
            <person name="Tirrell A."/>
            <person name="Ye W."/>
            <person name="Zimmer A."/>
            <person name="Barber R.D."/>
            <person name="Cann I."/>
            <person name="Graham D.E."/>
            <person name="Grahame D.A."/>
            <person name="Guss A.M."/>
            <person name="Hedderich R."/>
            <person name="Ingram-Smith C."/>
            <person name="Kuettner H.C."/>
            <person name="Krzycki J.A."/>
            <person name="Leigh J.A."/>
            <person name="Li W."/>
            <person name="Liu J."/>
            <person name="Mukhopadhyay B."/>
            <person name="Reeve J.N."/>
            <person name="Smith K."/>
            <person name="Springer T.A."/>
            <person name="Umayam L.A."/>
            <person name="White O."/>
            <person name="White R.H."/>
            <person name="de Macario E.C."/>
            <person name="Ferry J.G."/>
            <person name="Jarrell K.F."/>
            <person name="Jing H."/>
            <person name="Macario A.J.L."/>
            <person name="Paulsen I.T."/>
            <person name="Pritchett M."/>
            <person name="Sowers K.R."/>
            <person name="Swanson R.V."/>
            <person name="Zinder S.H."/>
            <person name="Lander E."/>
            <person name="Metcalf W.W."/>
            <person name="Birren B."/>
        </authorList>
    </citation>
    <scope>NUCLEOTIDE SEQUENCE [LARGE SCALE GENOMIC DNA]</scope>
    <source>
        <strain>ATCC 35395 / DSM 2834 / JCM 12185 / C2A</strain>
    </source>
</reference>
<feature type="chain" id="PRO_0000147763" description="7,8-didemethyl-8-hydroxy-5-deazariboflavin synthase">
    <location>
        <begin position="1"/>
        <end position="329"/>
    </location>
</feature>
<feature type="domain" description="Radical SAM core" evidence="2">
    <location>
        <begin position="1"/>
        <end position="235"/>
    </location>
</feature>
<feature type="binding site" evidence="1">
    <location>
        <position position="9"/>
    </location>
    <ligand>
        <name>[4Fe-4S] cluster</name>
        <dbReference type="ChEBI" id="CHEBI:49883"/>
        <note>4Fe-4S-S-AdoMet</note>
    </ligand>
</feature>
<feature type="binding site" evidence="1">
    <location>
        <position position="13"/>
    </location>
    <ligand>
        <name>[4Fe-4S] cluster</name>
        <dbReference type="ChEBI" id="CHEBI:49883"/>
        <note>4Fe-4S-S-AdoMet</note>
    </ligand>
</feature>
<feature type="binding site" evidence="1">
    <location>
        <position position="16"/>
    </location>
    <ligand>
        <name>[4Fe-4S] cluster</name>
        <dbReference type="ChEBI" id="CHEBI:49883"/>
        <note>4Fe-4S-S-AdoMet</note>
    </ligand>
</feature>
<keyword id="KW-0004">4Fe-4S</keyword>
<keyword id="KW-0408">Iron</keyword>
<keyword id="KW-0411">Iron-sulfur</keyword>
<keyword id="KW-0456">Lyase</keyword>
<keyword id="KW-0479">Metal-binding</keyword>
<keyword id="KW-1185">Reference proteome</keyword>
<keyword id="KW-0949">S-adenosyl-L-methionine</keyword>
<comment type="function">
    <text evidence="1">Catalyzes the radical-mediated synthesis of 7,8-didemethyl-8-hydroxy-5-deazariboflavin from 5-amino-5-(4-hydroxybenzyl)-6-(D-ribitylimino)-5,6-dihydrouracil.</text>
</comment>
<comment type="catalytic activity">
    <reaction evidence="1">
        <text>5-amino-5-(4-hydroxybenzyl)-6-(D-ribitylimino)-5,6-dihydrouracil + S-adenosyl-L-methionine = 7,8-didemethyl-8-hydroxy-5-deazariboflavin + 5'-deoxyadenosine + L-methionine + NH4(+) + H(+)</text>
        <dbReference type="Rhea" id="RHEA:55204"/>
        <dbReference type="ChEBI" id="CHEBI:15378"/>
        <dbReference type="ChEBI" id="CHEBI:17319"/>
        <dbReference type="ChEBI" id="CHEBI:28938"/>
        <dbReference type="ChEBI" id="CHEBI:57844"/>
        <dbReference type="ChEBI" id="CHEBI:59789"/>
        <dbReference type="ChEBI" id="CHEBI:59904"/>
        <dbReference type="ChEBI" id="CHEBI:85936"/>
        <dbReference type="EC" id="4.3.1.32"/>
    </reaction>
</comment>
<comment type="cofactor">
    <cofactor evidence="1">
        <name>[4Fe-4S] cluster</name>
        <dbReference type="ChEBI" id="CHEBI:49883"/>
    </cofactor>
    <text evidence="1">Binds 1 [4Fe-4S] cluster. The cluster is coordinated with 3 cysteines and an exchangeable S-adenosyl-L-methionine.</text>
</comment>
<comment type="pathway">
    <text evidence="1">Cofactor biosynthesis; coenzyme F0 biosynthesis.</text>
</comment>
<comment type="subunit">
    <text evidence="1">Consists of two subunits, CofG and CofH.</text>
</comment>
<comment type="similarity">
    <text evidence="1">Belongs to the radical SAM superfamily. CofG family.</text>
</comment>
<gene>
    <name evidence="1" type="primary">cofG</name>
    <name type="ordered locus">MA_1491</name>
</gene>
<protein>
    <recommendedName>
        <fullName evidence="1">7,8-didemethyl-8-hydroxy-5-deazariboflavin synthase</fullName>
        <ecNumber evidence="1">4.3.1.32</ecNumber>
    </recommendedName>
    <alternativeName>
        <fullName evidence="1">FO synthase subunit 1</fullName>
    </alternativeName>
</protein>
<name>COFG_METAC</name>
<organism>
    <name type="scientific">Methanosarcina acetivorans (strain ATCC 35395 / DSM 2834 / JCM 12185 / C2A)</name>
    <dbReference type="NCBI Taxonomy" id="188937"/>
    <lineage>
        <taxon>Archaea</taxon>
        <taxon>Methanobacteriati</taxon>
        <taxon>Methanobacteriota</taxon>
        <taxon>Stenosarchaea group</taxon>
        <taxon>Methanomicrobia</taxon>
        <taxon>Methanosarcinales</taxon>
        <taxon>Methanosarcinaceae</taxon>
        <taxon>Methanosarcina</taxon>
    </lineage>
</organism>
<evidence type="ECO:0000255" key="1">
    <source>
        <dbReference type="HAMAP-Rule" id="MF_01611"/>
    </source>
</evidence>
<evidence type="ECO:0000255" key="2">
    <source>
        <dbReference type="PROSITE-ProRule" id="PRU01266"/>
    </source>
</evidence>
<dbReference type="EC" id="4.3.1.32" evidence="1"/>
<dbReference type="EMBL" id="AE010299">
    <property type="protein sequence ID" value="AAM04905.1"/>
    <property type="molecule type" value="Genomic_DNA"/>
</dbReference>
<dbReference type="SMR" id="Q8TQP9"/>
<dbReference type="FunCoup" id="Q8TQP9">
    <property type="interactions" value="94"/>
</dbReference>
<dbReference type="STRING" id="188937.MA_1491"/>
<dbReference type="EnsemblBacteria" id="AAM04905">
    <property type="protein sequence ID" value="AAM04905"/>
    <property type="gene ID" value="MA_1491"/>
</dbReference>
<dbReference type="KEGG" id="mac:MA_1491"/>
<dbReference type="HOGENOM" id="CLU_054174_0_0_2"/>
<dbReference type="InParanoid" id="Q8TQP9"/>
<dbReference type="PhylomeDB" id="Q8TQP9"/>
<dbReference type="UniPathway" id="UPA00072"/>
<dbReference type="Proteomes" id="UP000002487">
    <property type="component" value="Chromosome"/>
</dbReference>
<dbReference type="GO" id="GO:0051539">
    <property type="term" value="F:4 iron, 4 sulfur cluster binding"/>
    <property type="evidence" value="ECO:0007669"/>
    <property type="project" value="UniProtKB-KW"/>
</dbReference>
<dbReference type="GO" id="GO:0044689">
    <property type="term" value="F:7,8-didemethyl-8-hydroxy-5-deazariboflavin synthase activity"/>
    <property type="evidence" value="ECO:0000318"/>
    <property type="project" value="GO_Central"/>
</dbReference>
<dbReference type="GO" id="GO:0005506">
    <property type="term" value="F:iron ion binding"/>
    <property type="evidence" value="ECO:0007669"/>
    <property type="project" value="UniProtKB-UniRule"/>
</dbReference>
<dbReference type="GO" id="GO:0016765">
    <property type="term" value="F:transferase activity, transferring alkyl or aryl (other than methyl) groups"/>
    <property type="evidence" value="ECO:0007669"/>
    <property type="project" value="InterPro"/>
</dbReference>
<dbReference type="CDD" id="cd01335">
    <property type="entry name" value="Radical_SAM"/>
    <property type="match status" value="1"/>
</dbReference>
<dbReference type="Gene3D" id="3.20.20.70">
    <property type="entry name" value="Aldolase class I"/>
    <property type="match status" value="1"/>
</dbReference>
<dbReference type="HAMAP" id="MF_01611">
    <property type="entry name" value="FO_synth_sub1"/>
    <property type="match status" value="1"/>
</dbReference>
<dbReference type="InterPro" id="IPR013785">
    <property type="entry name" value="Aldolase_TIM"/>
</dbReference>
<dbReference type="InterPro" id="IPR019939">
    <property type="entry name" value="CofG_family"/>
</dbReference>
<dbReference type="InterPro" id="IPR006638">
    <property type="entry name" value="Elp3/MiaA/NifB-like_rSAM"/>
</dbReference>
<dbReference type="InterPro" id="IPR034405">
    <property type="entry name" value="F420"/>
</dbReference>
<dbReference type="InterPro" id="IPR007197">
    <property type="entry name" value="rSAM"/>
</dbReference>
<dbReference type="NCBIfam" id="TIGR03550">
    <property type="entry name" value="F420_cofG"/>
    <property type="match status" value="1"/>
</dbReference>
<dbReference type="NCBIfam" id="NF004884">
    <property type="entry name" value="PRK06245.1"/>
    <property type="match status" value="1"/>
</dbReference>
<dbReference type="PANTHER" id="PTHR43076:SF15">
    <property type="entry name" value="7,8-DIDEMETHYL-8-HYDROXY-5-DEAZARIBOFLAVIN SYNTHASE"/>
    <property type="match status" value="1"/>
</dbReference>
<dbReference type="PANTHER" id="PTHR43076">
    <property type="entry name" value="FO SYNTHASE (COFH)"/>
    <property type="match status" value="1"/>
</dbReference>
<dbReference type="Pfam" id="PF04055">
    <property type="entry name" value="Radical_SAM"/>
    <property type="match status" value="1"/>
</dbReference>
<dbReference type="SFLD" id="SFLDF00294">
    <property type="entry name" value="7_8-didemethyl-8-hydroxy-5-dea"/>
    <property type="match status" value="1"/>
</dbReference>
<dbReference type="SFLD" id="SFLDG01064">
    <property type="entry name" value="F420__menaquinone_cofactor_bio"/>
    <property type="match status" value="1"/>
</dbReference>
<dbReference type="SMART" id="SM00729">
    <property type="entry name" value="Elp3"/>
    <property type="match status" value="1"/>
</dbReference>
<dbReference type="SUPFAM" id="SSF102114">
    <property type="entry name" value="Radical SAM enzymes"/>
    <property type="match status" value="1"/>
</dbReference>
<dbReference type="PROSITE" id="PS51918">
    <property type="entry name" value="RADICAL_SAM"/>
    <property type="match status" value="1"/>
</dbReference>
<accession>Q8TQP9</accession>
<proteinExistence type="inferred from homology"/>
<sequence>MFIPVTNICRNRCGYCGFRREPGQPGARLMKPAEVISILKNGVRAGCTEVLFTFGEYAEEMPGYNLMLDEIGYSSTLDYLLFLCETAIETGILPHTNAGVMTRSELEALKPLNASMGLMLESTASLEAHKDCPGKIPERRLETIREAGKLQIPYTSGLLIGIGESREDRIESLEAITSLHREYGHIQEVIIQNFAPKPGTPMESFPEPTVEEMMDAVVLARHVLPSDVSVQVAPNLIDPKALIGKGVTDLGGISPLTIDWINPEAEWPDVRDLQKKLGDIPLRERLPVYPQYVKRGWYSERIGSLIERLSDNEGYRKQPAIENAEDLEK</sequence>